<keyword id="KW-0072">Autophagy</keyword>
<keyword id="KW-0967">Endosome</keyword>
<keyword id="KW-0446">Lipid-binding</keyword>
<keyword id="KW-0472">Membrane</keyword>
<keyword id="KW-0653">Protein transport</keyword>
<keyword id="KW-1185">Reference proteome</keyword>
<keyword id="KW-0813">Transport</keyword>
<reference key="1">
    <citation type="journal article" date="2004" name="Nature">
        <title>Genome evolution in yeasts.</title>
        <authorList>
            <person name="Dujon B."/>
            <person name="Sherman D."/>
            <person name="Fischer G."/>
            <person name="Durrens P."/>
            <person name="Casaregola S."/>
            <person name="Lafontaine I."/>
            <person name="de Montigny J."/>
            <person name="Marck C."/>
            <person name="Neuveglise C."/>
            <person name="Talla E."/>
            <person name="Goffard N."/>
            <person name="Frangeul L."/>
            <person name="Aigle M."/>
            <person name="Anthouard V."/>
            <person name="Babour A."/>
            <person name="Barbe V."/>
            <person name="Barnay S."/>
            <person name="Blanchin S."/>
            <person name="Beckerich J.-M."/>
            <person name="Beyne E."/>
            <person name="Bleykasten C."/>
            <person name="Boisrame A."/>
            <person name="Boyer J."/>
            <person name="Cattolico L."/>
            <person name="Confanioleri F."/>
            <person name="de Daruvar A."/>
            <person name="Despons L."/>
            <person name="Fabre E."/>
            <person name="Fairhead C."/>
            <person name="Ferry-Dumazet H."/>
            <person name="Groppi A."/>
            <person name="Hantraye F."/>
            <person name="Hennequin C."/>
            <person name="Jauniaux N."/>
            <person name="Joyet P."/>
            <person name="Kachouri R."/>
            <person name="Kerrest A."/>
            <person name="Koszul R."/>
            <person name="Lemaire M."/>
            <person name="Lesur I."/>
            <person name="Ma L."/>
            <person name="Muller H."/>
            <person name="Nicaud J.-M."/>
            <person name="Nikolski M."/>
            <person name="Oztas S."/>
            <person name="Ozier-Kalogeropoulos O."/>
            <person name="Pellenz S."/>
            <person name="Potier S."/>
            <person name="Richard G.-F."/>
            <person name="Straub M.-L."/>
            <person name="Suleau A."/>
            <person name="Swennen D."/>
            <person name="Tekaia F."/>
            <person name="Wesolowski-Louvel M."/>
            <person name="Westhof E."/>
            <person name="Wirth B."/>
            <person name="Zeniou-Meyer M."/>
            <person name="Zivanovic Y."/>
            <person name="Bolotin-Fukuhara M."/>
            <person name="Thierry A."/>
            <person name="Bouchier C."/>
            <person name="Caudron B."/>
            <person name="Scarpelli C."/>
            <person name="Gaillardin C."/>
            <person name="Weissenbach J."/>
            <person name="Wincker P."/>
            <person name="Souciet J.-L."/>
        </authorList>
    </citation>
    <scope>NUCLEOTIDE SEQUENCE [LARGE SCALE GENOMIC DNA]</scope>
    <source>
        <strain>CLIB 122 / E 150</strain>
    </source>
</reference>
<name>SNX41_YARLI</name>
<sequence>MSDFEDNNPFAGADRRDSVSSDATDDGPSASFLATNTTNDFGGASFMAGGGSFYGAASQIGGLGGMGMSAYDPESALANPFDDGSNSFSATPTASITNQNDTAHEATNERTTTASQSNIPPIEIIEANKNHEGTSRGFITYTIRVGDVSVRRRYSEFESLRTTLTRMFPTLIVPPIPEKHSITDYAVAPTKAREDKDMIEHRQRMLQVFLNRCRNLPQISNCIVFQRFLDPHASWSEVLNSPPVSTLPRYSLRAPPVDPSNNVTEAHSYLPIPSANGVVRNRGGDEEGKQEAFFAEAEKTAKEYEAVIGGGLEKVARRILKRYTDIAGDYAELGGRFNALSLEESDSRMAATVEKVGQAIDSNYLATNHLVRELGRQFGEPLAESAQFSGVVRSVLKYRKQKALQLELTSDSLEAKRVTLASLESAEADSQRINDALGRTRSNNGPSTTNSGEQPSASPAPKKSSGFKIPGLSSLNSAFNNMMDADPEASRRQGIGKTREQIGQLEQALEVAQKDIVVANESVEKDLERFRAEREADLKCMIRAFLKCHIDWAKQNLDTWQSAQAEVESM</sequence>
<comment type="function">
    <text evidence="1">May be required for cytoplasm to vacuole transport (Cvt) and pexophagy.</text>
</comment>
<comment type="subcellular location">
    <subcellularLocation>
        <location evidence="1">Endosome membrane</location>
        <topology evidence="1">Peripheral membrane protein</topology>
    </subcellularLocation>
    <subcellularLocation>
        <location evidence="1">Endomembrane system</location>
        <topology evidence="1">Peripheral membrane protein</topology>
    </subcellularLocation>
    <text evidence="1">Endosome and other perivacuolar punctate structures.</text>
</comment>
<comment type="domain">
    <text evidence="1">The PX domain binds phosphatidylinositol 3-phosphate which is necessary for peripheral membrane localization to the perivacuolar punctate structures.</text>
</comment>
<comment type="similarity">
    <text evidence="4">Belongs to the sorting nexin family.</text>
</comment>
<protein>
    <recommendedName>
        <fullName>Sorting nexin-41</fullName>
    </recommendedName>
</protein>
<accession>Q6C9X0</accession>
<proteinExistence type="inferred from homology"/>
<gene>
    <name type="primary">SNX41</name>
    <name type="ordered locus">YALI0D07678g</name>
</gene>
<evidence type="ECO:0000250" key="1"/>
<evidence type="ECO:0000255" key="2">
    <source>
        <dbReference type="PROSITE-ProRule" id="PRU00147"/>
    </source>
</evidence>
<evidence type="ECO:0000256" key="3">
    <source>
        <dbReference type="SAM" id="MobiDB-lite"/>
    </source>
</evidence>
<evidence type="ECO:0000305" key="4"/>
<dbReference type="EMBL" id="CR382130">
    <property type="protein sequence ID" value="CAG80730.1"/>
    <property type="molecule type" value="Genomic_DNA"/>
</dbReference>
<dbReference type="RefSeq" id="XP_502542.1">
    <property type="nucleotide sequence ID" value="XM_502542.1"/>
</dbReference>
<dbReference type="SMR" id="Q6C9X0"/>
<dbReference type="FunCoup" id="Q6C9X0">
    <property type="interactions" value="106"/>
</dbReference>
<dbReference type="STRING" id="284591.Q6C9X0"/>
<dbReference type="EnsemblFungi" id="CAG80730">
    <property type="protein sequence ID" value="CAG80730"/>
    <property type="gene ID" value="YALI0_D07678g"/>
</dbReference>
<dbReference type="KEGG" id="yli:2910905"/>
<dbReference type="VEuPathDB" id="FungiDB:YALI0_D07678g"/>
<dbReference type="HOGENOM" id="CLU_014456_1_1_1"/>
<dbReference type="InParanoid" id="Q6C9X0"/>
<dbReference type="OMA" id="CRRMKEV"/>
<dbReference type="OrthoDB" id="88386at4891"/>
<dbReference type="Proteomes" id="UP000001300">
    <property type="component" value="Chromosome D"/>
</dbReference>
<dbReference type="GO" id="GO:0005829">
    <property type="term" value="C:cytosol"/>
    <property type="evidence" value="ECO:0007669"/>
    <property type="project" value="GOC"/>
</dbReference>
<dbReference type="GO" id="GO:0010008">
    <property type="term" value="C:endosome membrane"/>
    <property type="evidence" value="ECO:0007669"/>
    <property type="project" value="UniProtKB-SubCell"/>
</dbReference>
<dbReference type="GO" id="GO:0000407">
    <property type="term" value="C:phagophore assembly site"/>
    <property type="evidence" value="ECO:0000318"/>
    <property type="project" value="GO_Central"/>
</dbReference>
<dbReference type="GO" id="GO:0032266">
    <property type="term" value="F:phosphatidylinositol-3-phosphate binding"/>
    <property type="evidence" value="ECO:0000318"/>
    <property type="project" value="GO_Central"/>
</dbReference>
<dbReference type="GO" id="GO:0000422">
    <property type="term" value="P:autophagy of mitochondrion"/>
    <property type="evidence" value="ECO:0000318"/>
    <property type="project" value="GO_Central"/>
</dbReference>
<dbReference type="GO" id="GO:0015031">
    <property type="term" value="P:protein transport"/>
    <property type="evidence" value="ECO:0007669"/>
    <property type="project" value="UniProtKB-KW"/>
</dbReference>
<dbReference type="GO" id="GO:0061709">
    <property type="term" value="P:reticulophagy"/>
    <property type="evidence" value="ECO:0000318"/>
    <property type="project" value="GO_Central"/>
</dbReference>
<dbReference type="GO" id="GO:0042147">
    <property type="term" value="P:retrograde transport, endosome to Golgi"/>
    <property type="evidence" value="ECO:0007669"/>
    <property type="project" value="InterPro"/>
</dbReference>
<dbReference type="CDD" id="cd07629">
    <property type="entry name" value="BAR_Atg20p"/>
    <property type="match status" value="1"/>
</dbReference>
<dbReference type="CDD" id="cd06867">
    <property type="entry name" value="PX_SNX41_42"/>
    <property type="match status" value="1"/>
</dbReference>
<dbReference type="Gene3D" id="1.20.1270.60">
    <property type="entry name" value="Arfaptin homology (AH) domain/BAR domain"/>
    <property type="match status" value="1"/>
</dbReference>
<dbReference type="Gene3D" id="3.30.1520.10">
    <property type="entry name" value="Phox-like domain"/>
    <property type="match status" value="1"/>
</dbReference>
<dbReference type="InterPro" id="IPR027267">
    <property type="entry name" value="AH/BAR_dom_sf"/>
</dbReference>
<dbReference type="InterPro" id="IPR001683">
    <property type="entry name" value="PX_dom"/>
</dbReference>
<dbReference type="InterPro" id="IPR036871">
    <property type="entry name" value="PX_dom_sf"/>
</dbReference>
<dbReference type="InterPro" id="IPR044106">
    <property type="entry name" value="PX_Snx41/Atg20"/>
</dbReference>
<dbReference type="InterPro" id="IPR051079">
    <property type="entry name" value="Sorting_Nexin_Autophagy"/>
</dbReference>
<dbReference type="PANTHER" id="PTHR46979">
    <property type="entry name" value="SORTING NEXIN-41"/>
    <property type="match status" value="1"/>
</dbReference>
<dbReference type="PANTHER" id="PTHR46979:SF2">
    <property type="entry name" value="SORTING NEXIN-41"/>
    <property type="match status" value="1"/>
</dbReference>
<dbReference type="Pfam" id="PF00787">
    <property type="entry name" value="PX"/>
    <property type="match status" value="1"/>
</dbReference>
<dbReference type="SMART" id="SM00312">
    <property type="entry name" value="PX"/>
    <property type="match status" value="1"/>
</dbReference>
<dbReference type="SUPFAM" id="SSF64268">
    <property type="entry name" value="PX domain"/>
    <property type="match status" value="1"/>
</dbReference>
<dbReference type="PROSITE" id="PS50195">
    <property type="entry name" value="PX"/>
    <property type="match status" value="1"/>
</dbReference>
<feature type="chain" id="PRO_0000213833" description="Sorting nexin-41">
    <location>
        <begin position="1"/>
        <end position="570"/>
    </location>
</feature>
<feature type="domain" description="PX" evidence="2">
    <location>
        <begin position="98"/>
        <end position="236"/>
    </location>
</feature>
<feature type="region of interest" description="Disordered" evidence="3">
    <location>
        <begin position="1"/>
        <end position="31"/>
    </location>
</feature>
<feature type="region of interest" description="Disordered" evidence="3">
    <location>
        <begin position="81"/>
        <end position="115"/>
    </location>
</feature>
<feature type="region of interest" description="Disordered" evidence="3">
    <location>
        <begin position="429"/>
        <end position="498"/>
    </location>
</feature>
<feature type="compositionally biased region" description="Polar residues" evidence="3">
    <location>
        <begin position="84"/>
        <end position="101"/>
    </location>
</feature>
<feature type="compositionally biased region" description="Polar residues" evidence="3">
    <location>
        <begin position="440"/>
        <end position="454"/>
    </location>
</feature>
<feature type="compositionally biased region" description="Low complexity" evidence="3">
    <location>
        <begin position="455"/>
        <end position="464"/>
    </location>
</feature>
<feature type="binding site" evidence="1">
    <location>
        <position position="153"/>
    </location>
    <ligand>
        <name>a 1,2-diacyl-sn-glycero-3-phospho-(1D-myo-inositol-3-phosphate)</name>
        <dbReference type="ChEBI" id="CHEBI:58088"/>
    </ligand>
</feature>
<feature type="binding site" evidence="1">
    <location>
        <position position="155"/>
    </location>
    <ligand>
        <name>a 1,2-diacyl-sn-glycero-3-phospho-(1D-myo-inositol-3-phosphate)</name>
        <dbReference type="ChEBI" id="CHEBI:58088"/>
    </ligand>
</feature>
<feature type="binding site" evidence="1">
    <location>
        <position position="179"/>
    </location>
    <ligand>
        <name>a 1,2-diacyl-sn-glycero-3-phospho-(1D-myo-inositol-3-phosphate)</name>
        <dbReference type="ChEBI" id="CHEBI:58088"/>
    </ligand>
</feature>
<feature type="binding site" evidence="1">
    <location>
        <position position="202"/>
    </location>
    <ligand>
        <name>a 1,2-diacyl-sn-glycero-3-phospho-(1D-myo-inositol-3-phosphate)</name>
        <dbReference type="ChEBI" id="CHEBI:58088"/>
    </ligand>
</feature>
<organism>
    <name type="scientific">Yarrowia lipolytica (strain CLIB 122 / E 150)</name>
    <name type="common">Yeast</name>
    <name type="synonym">Candida lipolytica</name>
    <dbReference type="NCBI Taxonomy" id="284591"/>
    <lineage>
        <taxon>Eukaryota</taxon>
        <taxon>Fungi</taxon>
        <taxon>Dikarya</taxon>
        <taxon>Ascomycota</taxon>
        <taxon>Saccharomycotina</taxon>
        <taxon>Dipodascomycetes</taxon>
        <taxon>Dipodascales</taxon>
        <taxon>Dipodascales incertae sedis</taxon>
        <taxon>Yarrowia</taxon>
    </lineage>
</organism>